<accession>Q7Z6M3</accession>
<accession>A1L458</accession>
<accession>B4DUS1</accession>
<accession>B7ZM50</accession>
<accession>B9EGN0</accession>
<accession>D6RUW6</accession>
<accession>D6RUW8</accession>
<organism>
    <name type="scientific">Homo sapiens</name>
    <name type="common">Human</name>
    <dbReference type="NCBI Taxonomy" id="9606"/>
    <lineage>
        <taxon>Eukaryota</taxon>
        <taxon>Metazoa</taxon>
        <taxon>Chordata</taxon>
        <taxon>Craniata</taxon>
        <taxon>Vertebrata</taxon>
        <taxon>Euteleostomi</taxon>
        <taxon>Mammalia</taxon>
        <taxon>Eutheria</taxon>
        <taxon>Euarchontoglires</taxon>
        <taxon>Primates</taxon>
        <taxon>Haplorrhini</taxon>
        <taxon>Catarrhini</taxon>
        <taxon>Hominidae</taxon>
        <taxon>Homo</taxon>
    </lineage>
</organism>
<name>MILR1_HUMAN</name>
<feature type="signal peptide" evidence="3">
    <location>
        <begin position="1"/>
        <end position="19"/>
    </location>
</feature>
<feature type="chain" id="PRO_0000307364" description="Allergin-1">
    <location>
        <begin position="20"/>
        <end position="343"/>
    </location>
</feature>
<feature type="topological domain" description="Extracellular" evidence="3">
    <location>
        <begin position="20"/>
        <end position="227"/>
    </location>
</feature>
<feature type="transmembrane region" description="Helical" evidence="3">
    <location>
        <begin position="228"/>
        <end position="248"/>
    </location>
</feature>
<feature type="topological domain" description="Cytoplasmic" evidence="3">
    <location>
        <begin position="249"/>
        <end position="343"/>
    </location>
</feature>
<feature type="domain" description="Ig-like C2-type 1">
    <location>
        <begin position="35"/>
        <end position="118"/>
    </location>
</feature>
<feature type="domain" description="Ig-like C2-type 2">
    <location>
        <begin position="128"/>
        <end position="213"/>
    </location>
</feature>
<feature type="short sequence motif" description="ITIM motif">
    <location>
        <begin position="311"/>
        <end position="316"/>
    </location>
</feature>
<feature type="short sequence motif" description="ITIM motif">
    <location>
        <begin position="336"/>
        <end position="341"/>
    </location>
</feature>
<feature type="modified residue" description="Phosphotyrosine" evidence="2">
    <location>
        <position position="313"/>
    </location>
</feature>
<feature type="modified residue" description="Phosphotyrosine" evidence="2">
    <location>
        <position position="338"/>
    </location>
</feature>
<feature type="glycosylation site" description="N-linked (GlcNAc...) asparagine" evidence="3">
    <location>
        <position position="51"/>
    </location>
</feature>
<feature type="glycosylation site" description="N-linked (GlcNAc...) asparagine" evidence="3">
    <location>
        <position position="60"/>
    </location>
</feature>
<feature type="glycosylation site" description="N-linked (GlcNAc...) asparagine" evidence="3">
    <location>
        <position position="89"/>
    </location>
</feature>
<feature type="glycosylation site" description="N-linked (GlcNAc...) asparagine" evidence="3">
    <location>
        <position position="151"/>
    </location>
</feature>
<feature type="glycosylation site" description="N-linked (GlcNAc...) asparagine" evidence="3">
    <location>
        <position position="157"/>
    </location>
</feature>
<feature type="glycosylation site" description="N-linked (GlcNAc...) asparagine" evidence="3">
    <location>
        <position position="182"/>
    </location>
</feature>
<feature type="disulfide bond" evidence="1">
    <location>
        <begin position="56"/>
        <end position="103"/>
    </location>
</feature>
<feature type="disulfide bond" evidence="1">
    <location>
        <begin position="147"/>
        <end position="196"/>
    </location>
</feature>
<feature type="splice variant" id="VSP_040765" description="In isoform 3." evidence="6">
    <location>
        <begin position="33"/>
        <end position="122"/>
    </location>
</feature>
<feature type="splice variant" id="VSP_040766" description="In isoform 2." evidence="5 6">
    <location>
        <begin position="123"/>
        <end position="217"/>
    </location>
</feature>
<proteinExistence type="evidence at protein level"/>
<dbReference type="EMBL" id="AB542950">
    <property type="protein sequence ID" value="BAJ08251.1"/>
    <property type="molecule type" value="mRNA"/>
</dbReference>
<dbReference type="EMBL" id="AB542951">
    <property type="protein sequence ID" value="BAJ08252.1"/>
    <property type="molecule type" value="mRNA"/>
</dbReference>
<dbReference type="EMBL" id="AB542952">
    <property type="protein sequence ID" value="BAJ08253.1"/>
    <property type="molecule type" value="mRNA"/>
</dbReference>
<dbReference type="EMBL" id="AK300768">
    <property type="protein sequence ID" value="BAG62433.1"/>
    <property type="status" value="ALT_INIT"/>
    <property type="molecule type" value="mRNA"/>
</dbReference>
<dbReference type="EMBL" id="BC053534">
    <property type="protein sequence ID" value="AAH53534.1"/>
    <property type="molecule type" value="mRNA"/>
</dbReference>
<dbReference type="EMBL" id="BC130406">
    <property type="protein sequence ID" value="AAI30407.2"/>
    <property type="molecule type" value="mRNA"/>
</dbReference>
<dbReference type="EMBL" id="BC136594">
    <property type="protein sequence ID" value="AAI36595.1"/>
    <property type="status" value="ALT_INIT"/>
    <property type="molecule type" value="mRNA"/>
</dbReference>
<dbReference type="EMBL" id="BC144272">
    <property type="protein sequence ID" value="AAI44273.1"/>
    <property type="molecule type" value="mRNA"/>
</dbReference>
<dbReference type="CCDS" id="CCDS74133.1">
    <molecule id="Q7Z6M3-1"/>
</dbReference>
<dbReference type="CCDS" id="CCDS77087.1">
    <molecule id="Q7Z6M3-2"/>
</dbReference>
<dbReference type="CCDS" id="CCDS77088.1">
    <molecule id="Q7Z6M3-3"/>
</dbReference>
<dbReference type="RefSeq" id="NP_001078892.1">
    <molecule id="Q7Z6M3-1"/>
    <property type="nucleotide sequence ID" value="NM_001085423.2"/>
</dbReference>
<dbReference type="RefSeq" id="NP_001278245.1">
    <molecule id="Q7Z6M3-2"/>
    <property type="nucleotide sequence ID" value="NM_001291316.2"/>
</dbReference>
<dbReference type="RefSeq" id="NP_001278246.1">
    <molecule id="Q7Z6M3-3"/>
    <property type="nucleotide sequence ID" value="NM_001291317.2"/>
</dbReference>
<dbReference type="RefSeq" id="NP_001356422.1">
    <molecule id="Q7Z6M3-1"/>
    <property type="nucleotide sequence ID" value="NM_001369493.1"/>
</dbReference>
<dbReference type="RefSeq" id="XP_016879975.1">
    <property type="nucleotide sequence ID" value="XM_017024486.1"/>
</dbReference>
<dbReference type="RefSeq" id="XP_024306475.2">
    <molecule id="Q7Z6M3-1"/>
    <property type="nucleotide sequence ID" value="XM_024450707.2"/>
</dbReference>
<dbReference type="RefSeq" id="XP_024306476.2">
    <molecule id="Q7Z6M3-1"/>
    <property type="nucleotide sequence ID" value="XM_024450708.2"/>
</dbReference>
<dbReference type="RefSeq" id="XP_047291746.1">
    <molecule id="Q7Z6M3-1"/>
    <property type="nucleotide sequence ID" value="XM_047435790.1"/>
</dbReference>
<dbReference type="RefSeq" id="XP_047291747.1">
    <molecule id="Q7Z6M3-1"/>
    <property type="nucleotide sequence ID" value="XM_047435791.1"/>
</dbReference>
<dbReference type="RefSeq" id="XP_047291749.1">
    <molecule id="Q7Z6M3-2"/>
    <property type="nucleotide sequence ID" value="XM_047435793.1"/>
</dbReference>
<dbReference type="RefSeq" id="XP_054171742.1">
    <molecule id="Q7Z6M3-1"/>
    <property type="nucleotide sequence ID" value="XM_054315767.1"/>
</dbReference>
<dbReference type="RefSeq" id="XP_054171743.1">
    <molecule id="Q7Z6M3-1"/>
    <property type="nucleotide sequence ID" value="XM_054315768.1"/>
</dbReference>
<dbReference type="RefSeq" id="XP_054171744.1">
    <molecule id="Q7Z6M3-1"/>
    <property type="nucleotide sequence ID" value="XM_054315769.1"/>
</dbReference>
<dbReference type="RefSeq" id="XP_054171745.1">
    <molecule id="Q7Z6M3-1"/>
    <property type="nucleotide sequence ID" value="XM_054315770.1"/>
</dbReference>
<dbReference type="RefSeq" id="XP_054171746.1">
    <molecule id="Q7Z6M3-1"/>
    <property type="nucleotide sequence ID" value="XM_054315771.1"/>
</dbReference>
<dbReference type="RefSeq" id="XP_054171748.1">
    <molecule id="Q7Z6M3-2"/>
    <property type="nucleotide sequence ID" value="XM_054315773.1"/>
</dbReference>
<dbReference type="BioGRID" id="129734">
    <property type="interactions" value="76"/>
</dbReference>
<dbReference type="FunCoup" id="Q7Z6M3">
    <property type="interactions" value="362"/>
</dbReference>
<dbReference type="IntAct" id="Q7Z6M3">
    <property type="interactions" value="65"/>
</dbReference>
<dbReference type="STRING" id="9606.ENSP00000482801"/>
<dbReference type="GlyCosmos" id="Q7Z6M3">
    <property type="glycosylation" value="6 sites, No reported glycans"/>
</dbReference>
<dbReference type="GlyGen" id="Q7Z6M3">
    <property type="glycosylation" value="6 sites, 10 N-linked glycans (3 sites)"/>
</dbReference>
<dbReference type="iPTMnet" id="Q7Z6M3"/>
<dbReference type="PhosphoSitePlus" id="Q7Z6M3"/>
<dbReference type="BioMuta" id="MILR1"/>
<dbReference type="DMDM" id="160013631"/>
<dbReference type="MassIVE" id="Q7Z6M3"/>
<dbReference type="PaxDb" id="9606-ENSP00000482801"/>
<dbReference type="PeptideAtlas" id="Q7Z6M3"/>
<dbReference type="ProteomicsDB" id="69447">
    <molecule id="Q7Z6M3-1"/>
</dbReference>
<dbReference type="ProteomicsDB" id="69448">
    <molecule id="Q7Z6M3-2"/>
</dbReference>
<dbReference type="ProteomicsDB" id="69449">
    <molecule id="Q7Z6M3-3"/>
</dbReference>
<dbReference type="Antibodypedia" id="68852">
    <property type="antibodies" value="100 antibodies from 13 providers"/>
</dbReference>
<dbReference type="DNASU" id="284021"/>
<dbReference type="Ensembl" id="ENST00000612535.4">
    <molecule id="Q7Z6M3-3"/>
    <property type="protein sequence ID" value="ENSP00000477504.1"/>
    <property type="gene ID" value="ENSG00000271605.7"/>
</dbReference>
<dbReference type="Ensembl" id="ENST00000615220.4">
    <molecule id="Q7Z6M3-1"/>
    <property type="protein sequence ID" value="ENSP00000480749.1"/>
    <property type="gene ID" value="ENSG00000271605.7"/>
</dbReference>
<dbReference type="Ensembl" id="ENST00000616498.4">
    <molecule id="Q7Z6M3-2"/>
    <property type="protein sequence ID" value="ENSP00000481318.1"/>
    <property type="gene ID" value="ENSG00000271605.7"/>
</dbReference>
<dbReference type="Ensembl" id="ENST00000619286.5">
    <molecule id="Q7Z6M3-1"/>
    <property type="protein sequence ID" value="ENSP00000482801.1"/>
    <property type="gene ID" value="ENSG00000271605.7"/>
</dbReference>
<dbReference type="Ensembl" id="ENST00000718366.1">
    <molecule id="Q7Z6M3-1"/>
    <property type="protein sequence ID" value="ENSP00000520795.1"/>
    <property type="gene ID" value="ENSG00000271605.7"/>
</dbReference>
<dbReference type="Ensembl" id="ENST00000718367.1">
    <molecule id="Q7Z6M3-1"/>
    <property type="protein sequence ID" value="ENSP00000520797.1"/>
    <property type="gene ID" value="ENSG00000271605.7"/>
</dbReference>
<dbReference type="Ensembl" id="ENST00000718368.1">
    <molecule id="Q7Z6M3-1"/>
    <property type="protein sequence ID" value="ENSP00000520798.1"/>
    <property type="gene ID" value="ENSG00000271605.7"/>
</dbReference>
<dbReference type="GeneID" id="284021"/>
<dbReference type="KEGG" id="hsa:284021"/>
<dbReference type="MANE-Select" id="ENST00000619286.5">
    <property type="protein sequence ID" value="ENSP00000482801.1"/>
    <property type="RefSeq nucleotide sequence ID" value="NM_001085423.2"/>
    <property type="RefSeq protein sequence ID" value="NP_001078892.1"/>
</dbReference>
<dbReference type="UCSC" id="uc010wpz.4">
    <molecule id="Q7Z6M3-1"/>
    <property type="organism name" value="human"/>
</dbReference>
<dbReference type="AGR" id="HGNC:27570"/>
<dbReference type="CTD" id="284021"/>
<dbReference type="DisGeNET" id="284021"/>
<dbReference type="GeneCards" id="MILR1"/>
<dbReference type="HGNC" id="HGNC:27570">
    <property type="gene designation" value="MILR1"/>
</dbReference>
<dbReference type="HPA" id="ENSG00000271605">
    <property type="expression patterns" value="Tissue enhanced (lymphoid)"/>
</dbReference>
<dbReference type="MalaCards" id="MILR1"/>
<dbReference type="neXtProt" id="NX_Q7Z6M3"/>
<dbReference type="OpenTargets" id="ENSG00000271605"/>
<dbReference type="PharmGKB" id="PA142672243"/>
<dbReference type="VEuPathDB" id="HostDB:ENSG00000271605"/>
<dbReference type="eggNOG" id="ENOG502S5BW">
    <property type="taxonomic scope" value="Eukaryota"/>
</dbReference>
<dbReference type="GeneTree" id="ENSGT01120000271918"/>
<dbReference type="HOGENOM" id="CLU_069833_0_0_1"/>
<dbReference type="InParanoid" id="Q7Z6M3"/>
<dbReference type="OMA" id="HEIHYAT"/>
<dbReference type="OrthoDB" id="9947088at2759"/>
<dbReference type="PAN-GO" id="Q7Z6M3">
    <property type="GO annotations" value="4 GO annotations based on evolutionary models"/>
</dbReference>
<dbReference type="PhylomeDB" id="Q7Z6M3"/>
<dbReference type="PathwayCommons" id="Q7Z6M3"/>
<dbReference type="SignaLink" id="Q7Z6M3"/>
<dbReference type="BioGRID-ORCS" id="284021">
    <property type="hits" value="6 hits in 276 CRISPR screens"/>
</dbReference>
<dbReference type="ChiTaRS" id="MILR1">
    <property type="organism name" value="human"/>
</dbReference>
<dbReference type="GenomeRNAi" id="284021"/>
<dbReference type="Pharos" id="Q7Z6M3">
    <property type="development level" value="Tbio"/>
</dbReference>
<dbReference type="PRO" id="PR:Q7Z6M3"/>
<dbReference type="Proteomes" id="UP000005640">
    <property type="component" value="Chromosome 17"/>
</dbReference>
<dbReference type="RNAct" id="Q7Z6M3">
    <property type="molecule type" value="protein"/>
</dbReference>
<dbReference type="Bgee" id="ENSG00000271605">
    <property type="expression patterns" value="Expressed in monocyte and 121 other cell types or tissues"/>
</dbReference>
<dbReference type="ExpressionAtlas" id="Q7Z6M3">
    <property type="expression patterns" value="baseline and differential"/>
</dbReference>
<dbReference type="GO" id="GO:0009897">
    <property type="term" value="C:external side of plasma membrane"/>
    <property type="evidence" value="ECO:0000318"/>
    <property type="project" value="GO_Central"/>
</dbReference>
<dbReference type="GO" id="GO:0005886">
    <property type="term" value="C:plasma membrane"/>
    <property type="evidence" value="ECO:0000303"/>
    <property type="project" value="UniProtKB"/>
</dbReference>
<dbReference type="GO" id="GO:0004888">
    <property type="term" value="F:transmembrane signaling receptor activity"/>
    <property type="evidence" value="ECO:0000318"/>
    <property type="project" value="GO_Central"/>
</dbReference>
<dbReference type="GO" id="GO:0007166">
    <property type="term" value="P:cell surface receptor signaling pathway"/>
    <property type="evidence" value="ECO:0000318"/>
    <property type="project" value="GO_Central"/>
</dbReference>
<dbReference type="GO" id="GO:0006955">
    <property type="term" value="P:immune response"/>
    <property type="evidence" value="ECO:0000318"/>
    <property type="project" value="GO_Central"/>
</dbReference>
<dbReference type="GO" id="GO:0043303">
    <property type="term" value="P:mast cell degranulation"/>
    <property type="evidence" value="ECO:0000250"/>
    <property type="project" value="UniProtKB"/>
</dbReference>
<dbReference type="GO" id="GO:0033004">
    <property type="term" value="P:negative regulation of mast cell activation"/>
    <property type="evidence" value="ECO:0000250"/>
    <property type="project" value="UniProtKB"/>
</dbReference>
<dbReference type="FunFam" id="2.60.40.10:FF:001338">
    <property type="entry name" value="MILR1 isoform 7"/>
    <property type="match status" value="1"/>
</dbReference>
<dbReference type="Gene3D" id="2.60.40.10">
    <property type="entry name" value="Immunoglobulins"/>
    <property type="match status" value="2"/>
</dbReference>
<dbReference type="InterPro" id="IPR036179">
    <property type="entry name" value="Ig-like_dom_sf"/>
</dbReference>
<dbReference type="InterPro" id="IPR013783">
    <property type="entry name" value="Ig-like_fold"/>
</dbReference>
<dbReference type="InterPro" id="IPR040878">
    <property type="entry name" value="IL-40-like_Ig"/>
</dbReference>
<dbReference type="Pfam" id="PF13895">
    <property type="entry name" value="Ig_2"/>
    <property type="match status" value="1"/>
</dbReference>
<dbReference type="Pfam" id="PF17736">
    <property type="entry name" value="Ig_C17orf99"/>
    <property type="match status" value="1"/>
</dbReference>
<dbReference type="SUPFAM" id="SSF48726">
    <property type="entry name" value="Immunoglobulin"/>
    <property type="match status" value="2"/>
</dbReference>
<gene>
    <name type="primary">MILR1</name>
    <name type="synonym">C17orf60</name>
    <name type="synonym">MCA32</name>
</gene>
<evidence type="ECO:0000250" key="1"/>
<evidence type="ECO:0000250" key="2">
    <source>
        <dbReference type="UniProtKB" id="Q3TB92"/>
    </source>
</evidence>
<evidence type="ECO:0000255" key="3"/>
<evidence type="ECO:0000269" key="4">
    <source>
    </source>
</evidence>
<evidence type="ECO:0000303" key="5">
    <source>
    </source>
</evidence>
<evidence type="ECO:0000303" key="6">
    <source>
    </source>
</evidence>
<evidence type="ECO:0000305" key="7"/>
<reference key="1">
    <citation type="journal article" date="2010" name="Nat. Immunol.">
        <title>An immunoglobulin-like receptor, Allergin-1, inhibits immunoglobulin E-mediated immediate hypersensitivity reactions.</title>
        <authorList>
            <person name="Hitomi K."/>
            <person name="Tahara-Hanaoka S."/>
            <person name="Someya S."/>
            <person name="Fujiki A."/>
            <person name="Tada H."/>
            <person name="Sugiyama T."/>
            <person name="Shibayama S."/>
            <person name="Shibuya K."/>
            <person name="Shibuya A."/>
        </authorList>
    </citation>
    <scope>NUCLEOTIDE SEQUENCE [MRNA] (ISOFORMS 1; 2 AND 3)</scope>
    <scope>SUBCELLULAR LOCATION</scope>
    <scope>TISSUE SPECIFICITY</scope>
    <scope>GLYCOSYLATION</scope>
</reference>
<reference key="2">
    <citation type="journal article" date="2004" name="Nat. Genet.">
        <title>Complete sequencing and characterization of 21,243 full-length human cDNAs.</title>
        <authorList>
            <person name="Ota T."/>
            <person name="Suzuki Y."/>
            <person name="Nishikawa T."/>
            <person name="Otsuki T."/>
            <person name="Sugiyama T."/>
            <person name="Irie R."/>
            <person name="Wakamatsu A."/>
            <person name="Hayashi K."/>
            <person name="Sato H."/>
            <person name="Nagai K."/>
            <person name="Kimura K."/>
            <person name="Makita H."/>
            <person name="Sekine M."/>
            <person name="Obayashi M."/>
            <person name="Nishi T."/>
            <person name="Shibahara T."/>
            <person name="Tanaka T."/>
            <person name="Ishii S."/>
            <person name="Yamamoto J."/>
            <person name="Saito K."/>
            <person name="Kawai Y."/>
            <person name="Isono Y."/>
            <person name="Nakamura Y."/>
            <person name="Nagahari K."/>
            <person name="Murakami K."/>
            <person name="Yasuda T."/>
            <person name="Iwayanagi T."/>
            <person name="Wagatsuma M."/>
            <person name="Shiratori A."/>
            <person name="Sudo H."/>
            <person name="Hosoiri T."/>
            <person name="Kaku Y."/>
            <person name="Kodaira H."/>
            <person name="Kondo H."/>
            <person name="Sugawara M."/>
            <person name="Takahashi M."/>
            <person name="Kanda K."/>
            <person name="Yokoi T."/>
            <person name="Furuya T."/>
            <person name="Kikkawa E."/>
            <person name="Omura Y."/>
            <person name="Abe K."/>
            <person name="Kamihara K."/>
            <person name="Katsuta N."/>
            <person name="Sato K."/>
            <person name="Tanikawa M."/>
            <person name="Yamazaki M."/>
            <person name="Ninomiya K."/>
            <person name="Ishibashi T."/>
            <person name="Yamashita H."/>
            <person name="Murakawa K."/>
            <person name="Fujimori K."/>
            <person name="Tanai H."/>
            <person name="Kimata M."/>
            <person name="Watanabe M."/>
            <person name="Hiraoka S."/>
            <person name="Chiba Y."/>
            <person name="Ishida S."/>
            <person name="Ono Y."/>
            <person name="Takiguchi S."/>
            <person name="Watanabe S."/>
            <person name="Yosida M."/>
            <person name="Hotuta T."/>
            <person name="Kusano J."/>
            <person name="Kanehori K."/>
            <person name="Takahashi-Fujii A."/>
            <person name="Hara H."/>
            <person name="Tanase T.-O."/>
            <person name="Nomura Y."/>
            <person name="Togiya S."/>
            <person name="Komai F."/>
            <person name="Hara R."/>
            <person name="Takeuchi K."/>
            <person name="Arita M."/>
            <person name="Imose N."/>
            <person name="Musashino K."/>
            <person name="Yuuki H."/>
            <person name="Oshima A."/>
            <person name="Sasaki N."/>
            <person name="Aotsuka S."/>
            <person name="Yoshikawa Y."/>
            <person name="Matsunawa H."/>
            <person name="Ichihara T."/>
            <person name="Shiohata N."/>
            <person name="Sano S."/>
            <person name="Moriya S."/>
            <person name="Momiyama H."/>
            <person name="Satoh N."/>
            <person name="Takami S."/>
            <person name="Terashima Y."/>
            <person name="Suzuki O."/>
            <person name="Nakagawa S."/>
            <person name="Senoh A."/>
            <person name="Mizoguchi H."/>
            <person name="Goto Y."/>
            <person name="Shimizu F."/>
            <person name="Wakebe H."/>
            <person name="Hishigaki H."/>
            <person name="Watanabe T."/>
            <person name="Sugiyama A."/>
            <person name="Takemoto M."/>
            <person name="Kawakami B."/>
            <person name="Yamazaki M."/>
            <person name="Watanabe K."/>
            <person name="Kumagai A."/>
            <person name="Itakura S."/>
            <person name="Fukuzumi Y."/>
            <person name="Fujimori Y."/>
            <person name="Komiyama M."/>
            <person name="Tashiro H."/>
            <person name="Tanigami A."/>
            <person name="Fujiwara T."/>
            <person name="Ono T."/>
            <person name="Yamada K."/>
            <person name="Fujii Y."/>
            <person name="Ozaki K."/>
            <person name="Hirao M."/>
            <person name="Ohmori Y."/>
            <person name="Kawabata A."/>
            <person name="Hikiji T."/>
            <person name="Kobatake N."/>
            <person name="Inagaki H."/>
            <person name="Ikema Y."/>
            <person name="Okamoto S."/>
            <person name="Okitani R."/>
            <person name="Kawakami T."/>
            <person name="Noguchi S."/>
            <person name="Itoh T."/>
            <person name="Shigeta K."/>
            <person name="Senba T."/>
            <person name="Matsumura K."/>
            <person name="Nakajima Y."/>
            <person name="Mizuno T."/>
            <person name="Morinaga M."/>
            <person name="Sasaki M."/>
            <person name="Togashi T."/>
            <person name="Oyama M."/>
            <person name="Hata H."/>
            <person name="Watanabe M."/>
            <person name="Komatsu T."/>
            <person name="Mizushima-Sugano J."/>
            <person name="Satoh T."/>
            <person name="Shirai Y."/>
            <person name="Takahashi Y."/>
            <person name="Nakagawa K."/>
            <person name="Okumura K."/>
            <person name="Nagase T."/>
            <person name="Nomura N."/>
            <person name="Kikuchi H."/>
            <person name="Masuho Y."/>
            <person name="Yamashita R."/>
            <person name="Nakai K."/>
            <person name="Yada T."/>
            <person name="Nakamura Y."/>
            <person name="Ohara O."/>
            <person name="Isogai T."/>
            <person name="Sugano S."/>
        </authorList>
    </citation>
    <scope>NUCLEOTIDE SEQUENCE [LARGE SCALE MRNA] (ISOFORM 1)</scope>
</reference>
<reference key="3">
    <citation type="journal article" date="2004" name="Genome Res.">
        <title>The status, quality, and expansion of the NIH full-length cDNA project: the Mammalian Gene Collection (MGC).</title>
        <authorList>
            <consortium name="The MGC Project Team"/>
        </authorList>
    </citation>
    <scope>NUCLEOTIDE SEQUENCE [LARGE SCALE MRNA] (ISOFORMS 1 AND 2)</scope>
    <source>
        <tissue>Prostate</tissue>
        <tissue>Testis</tissue>
    </source>
</reference>
<keyword id="KW-0025">Alternative splicing</keyword>
<keyword id="KW-1003">Cell membrane</keyword>
<keyword id="KW-1015">Disulfide bond</keyword>
<keyword id="KW-0325">Glycoprotein</keyword>
<keyword id="KW-0393">Immunoglobulin domain</keyword>
<keyword id="KW-0472">Membrane</keyword>
<keyword id="KW-0597">Phosphoprotein</keyword>
<keyword id="KW-1267">Proteomics identification</keyword>
<keyword id="KW-1185">Reference proteome</keyword>
<keyword id="KW-0677">Repeat</keyword>
<keyword id="KW-0732">Signal</keyword>
<keyword id="KW-0812">Transmembrane</keyword>
<keyword id="KW-1133">Transmembrane helix</keyword>
<protein>
    <recommendedName>
        <fullName>Allergin-1</fullName>
    </recommendedName>
    <alternativeName>
        <fullName>Allergy inhibitory receptor 1</fullName>
    </alternativeName>
    <alternativeName>
        <fullName>Mast cell antigen 32</fullName>
        <shortName>MCA-32</shortName>
    </alternativeName>
    <alternativeName>
        <fullName>Mast cell immunoglobulin-like receptor 1</fullName>
    </alternativeName>
</protein>
<sequence>MWSHLNRLLFWSIFSSVTCRKAVLDCEAMKTNEFPSPCLDSKTKVVMKGQNVSMFCSHKNKSLQITYSLFRRKTHLGTQDGKGEPAIFNLSITEAHESGPYKCKAQVTSCSKYSRDFSFTIVDPVTSPVLNIMVIQTETDRHITLHCLSVNGSLPINYTFFENHVAISPAISKYDREPAEFNLTKKNPGEEEEYRCEAKNRLPNYATYSHPVTMPSTGGDSCPFCLKLLLPGLLLLLVVIILILAFWVLPKYKTRKAMRNNVPRDRGDTAMEVGIYANILEKQAKEESVPEVGSRPCVSTAQDEAKHSQELQYATPVFQEVAPREQEACDSYKSGYVYSELNF</sequence>
<comment type="function">
    <text evidence="1">Immunoglobulin-like receptor which plays an inhibitory role in degranulation of mast cells. Negatively regulates IgE-mediated mast cell activation and suppresses the type I immediate hypersensitivity reaction (By similarity).</text>
</comment>
<comment type="subunit">
    <text evidence="1">Monomer. Interacts (tyrosine-phosphorylated) with PTPN6, PTPN11 and INPP5D.</text>
</comment>
<comment type="interaction">
    <interactant intactId="EBI-18391669">
        <id>Q7Z6M3</id>
    </interactant>
    <interactant intactId="EBI-17442596">
        <id>Q6UX41-6</id>
        <label>BTNL8</label>
    </interactant>
    <organismsDiffer>false</organismsDiffer>
    <experiments>3</experiments>
</comment>
<comment type="interaction">
    <interactant intactId="EBI-18391669">
        <id>Q7Z6M3</id>
    </interactant>
    <interactant intactId="EBI-12003442">
        <id>Q8WVX3-2</id>
        <label>C4orf3</label>
    </interactant>
    <organismsDiffer>false</organismsDiffer>
    <experiments>3</experiments>
</comment>
<comment type="interaction">
    <interactant intactId="EBI-18391669">
        <id>Q7Z6M3</id>
    </interactant>
    <interactant intactId="EBI-6166686">
        <id>Q96F15</id>
        <label>GIMAP5</label>
    </interactant>
    <organismsDiffer>false</organismsDiffer>
    <experiments>3</experiments>
</comment>
<comment type="interaction">
    <interactant intactId="EBI-18391669">
        <id>Q7Z6M3</id>
    </interactant>
    <interactant intactId="EBI-5916693">
        <id>Q9HCP6</id>
        <label>HHATL</label>
    </interactant>
    <organismsDiffer>false</organismsDiffer>
    <experiments>3</experiments>
</comment>
<comment type="interaction">
    <interactant intactId="EBI-18391669">
        <id>Q7Z6M3</id>
    </interactant>
    <interactant intactId="EBI-12179105">
        <id>O75425</id>
        <label>MOSPD3</label>
    </interactant>
    <organismsDiffer>false</organismsDiffer>
    <experiments>3</experiments>
</comment>
<comment type="interaction">
    <interactant intactId="EBI-18391669">
        <id>Q7Z6M3</id>
    </interactant>
    <interactant intactId="EBI-2844246">
        <id>Q9NV12</id>
        <label>TMEM140</label>
    </interactant>
    <organismsDiffer>false</organismsDiffer>
    <experiments>3</experiments>
</comment>
<comment type="subcellular location">
    <subcellularLocation>
        <location evidence="4">Cell membrane</location>
        <topology evidence="4">Single-pass type I membrane protein</topology>
    </subcellularLocation>
</comment>
<comment type="alternative products">
    <event type="alternative splicing"/>
    <isoform>
        <id>Q7Z6M3-1</id>
        <name>1</name>
        <name>L</name>
        <sequence type="displayed"/>
    </isoform>
    <isoform>
        <id>Q7Z6M3-2</id>
        <name>2</name>
        <name>S1</name>
        <sequence type="described" ref="VSP_040766"/>
    </isoform>
    <isoform>
        <id>Q7Z6M3-3</id>
        <name>3</name>
        <name>S2</name>
        <sequence type="described" ref="VSP_040765"/>
    </isoform>
</comment>
<comment type="tissue specificity">
    <text evidence="4">Expressed in myeloid cells (dendritic cells, macrophages and neutrophils, weak expression on B-cells but not in T-cells or natural killer cells), peripheral blood basophils and mast cells (at protein level).</text>
</comment>
<comment type="PTM">
    <text evidence="4">N-glycosylated.</text>
</comment>
<comment type="sequence caution" evidence="7">
    <conflict type="erroneous initiation">
        <sequence resource="EMBL-CDS" id="AAI36595"/>
    </conflict>
    <text>Truncated N-terminus.</text>
</comment>
<comment type="sequence caution" evidence="7">
    <conflict type="erroneous initiation">
        <sequence resource="EMBL-CDS" id="BAG62433"/>
    </conflict>
    <text>Extended N-terminus.</text>
</comment>